<comment type="function">
    <text evidence="1">Activator of cell division through the inhibition of FtsZ GTPase activity, therefore promoting FtsZ assembly into bundles of protofilaments necessary for the formation of the division Z ring. It is recruited early at mid-cell but it is not essential for cell division.</text>
</comment>
<comment type="subunit">
    <text evidence="1">Homodimer. Interacts with FtsZ.</text>
</comment>
<comment type="subcellular location">
    <subcellularLocation>
        <location evidence="1">Cytoplasm</location>
    </subcellularLocation>
    <text evidence="1">Localizes at mid-cell.</text>
</comment>
<comment type="similarity">
    <text evidence="1">Belongs to the ZapA family. Type 1 subfamily.</text>
</comment>
<gene>
    <name evidence="1" type="primary">zapA</name>
    <name type="ordered locus">SeHA_C3293</name>
</gene>
<feature type="chain" id="PRO_1000189521" description="Cell division protein ZapA">
    <location>
        <begin position="1"/>
        <end position="109"/>
    </location>
</feature>
<feature type="coiled-coil region" evidence="1">
    <location>
        <begin position="21"/>
        <end position="97"/>
    </location>
</feature>
<evidence type="ECO:0000255" key="1">
    <source>
        <dbReference type="HAMAP-Rule" id="MF_02012"/>
    </source>
</evidence>
<accession>B4THE3</accession>
<sequence length="109" mass="12523">MSAQPVDIQIFGRSLRVNCPPDQRDALNQAADDLNQRLQDLKVRTRVTNTEQLVFIAALNISYELTQEKAKTRDYAASMEQRIRMLQQTIEQALLDQGRITEKTGQNFE</sequence>
<dbReference type="EMBL" id="CP001120">
    <property type="protein sequence ID" value="ACF65930.1"/>
    <property type="molecule type" value="Genomic_DNA"/>
</dbReference>
<dbReference type="RefSeq" id="WP_001276011.1">
    <property type="nucleotide sequence ID" value="NC_011083.1"/>
</dbReference>
<dbReference type="SMR" id="B4THE3"/>
<dbReference type="GeneID" id="66757358"/>
<dbReference type="KEGG" id="seh:SeHA_C3293"/>
<dbReference type="HOGENOM" id="CLU_116623_3_0_6"/>
<dbReference type="Proteomes" id="UP000001866">
    <property type="component" value="Chromosome"/>
</dbReference>
<dbReference type="GO" id="GO:0032153">
    <property type="term" value="C:cell division site"/>
    <property type="evidence" value="ECO:0007669"/>
    <property type="project" value="TreeGrafter"/>
</dbReference>
<dbReference type="GO" id="GO:0030428">
    <property type="term" value="C:cell septum"/>
    <property type="evidence" value="ECO:0007669"/>
    <property type="project" value="TreeGrafter"/>
</dbReference>
<dbReference type="GO" id="GO:0005829">
    <property type="term" value="C:cytosol"/>
    <property type="evidence" value="ECO:0007669"/>
    <property type="project" value="TreeGrafter"/>
</dbReference>
<dbReference type="GO" id="GO:0005886">
    <property type="term" value="C:plasma membrane"/>
    <property type="evidence" value="ECO:0007669"/>
    <property type="project" value="UniProtKB-UniRule"/>
</dbReference>
<dbReference type="GO" id="GO:0000917">
    <property type="term" value="P:division septum assembly"/>
    <property type="evidence" value="ECO:0007669"/>
    <property type="project" value="UniProtKB-KW"/>
</dbReference>
<dbReference type="GO" id="GO:0043093">
    <property type="term" value="P:FtsZ-dependent cytokinesis"/>
    <property type="evidence" value="ECO:0007669"/>
    <property type="project" value="TreeGrafter"/>
</dbReference>
<dbReference type="GO" id="GO:0000921">
    <property type="term" value="P:septin ring assembly"/>
    <property type="evidence" value="ECO:0007669"/>
    <property type="project" value="TreeGrafter"/>
</dbReference>
<dbReference type="FunFam" id="1.20.5.50:FF:000001">
    <property type="entry name" value="Cell division protein ZapA"/>
    <property type="match status" value="1"/>
</dbReference>
<dbReference type="FunFam" id="3.30.160.880:FF:000001">
    <property type="entry name" value="Cell division protein ZapA"/>
    <property type="match status" value="1"/>
</dbReference>
<dbReference type="Gene3D" id="1.20.5.50">
    <property type="match status" value="1"/>
</dbReference>
<dbReference type="Gene3D" id="3.30.160.880">
    <property type="entry name" value="Cell division protein ZapA protomer, N-terminal domain"/>
    <property type="match status" value="1"/>
</dbReference>
<dbReference type="HAMAP" id="MF_02012">
    <property type="entry name" value="ZapA_type1"/>
    <property type="match status" value="1"/>
</dbReference>
<dbReference type="InterPro" id="IPR007838">
    <property type="entry name" value="Cell_div_ZapA-like"/>
</dbReference>
<dbReference type="InterPro" id="IPR036192">
    <property type="entry name" value="Cell_div_ZapA-like_sf"/>
</dbReference>
<dbReference type="InterPro" id="IPR023771">
    <property type="entry name" value="Cell_div_ZapA_eubact"/>
</dbReference>
<dbReference type="InterPro" id="IPR042233">
    <property type="entry name" value="Cell_div_ZapA_N"/>
</dbReference>
<dbReference type="NCBIfam" id="NF008209">
    <property type="entry name" value="PRK10972.1"/>
    <property type="match status" value="1"/>
</dbReference>
<dbReference type="PANTHER" id="PTHR34981">
    <property type="entry name" value="CELL DIVISION PROTEIN ZAPA"/>
    <property type="match status" value="1"/>
</dbReference>
<dbReference type="PANTHER" id="PTHR34981:SF1">
    <property type="entry name" value="CELL DIVISION PROTEIN ZAPA"/>
    <property type="match status" value="1"/>
</dbReference>
<dbReference type="Pfam" id="PF05164">
    <property type="entry name" value="ZapA"/>
    <property type="match status" value="1"/>
</dbReference>
<dbReference type="SUPFAM" id="SSF102829">
    <property type="entry name" value="Cell division protein ZapA-like"/>
    <property type="match status" value="1"/>
</dbReference>
<organism>
    <name type="scientific">Salmonella heidelberg (strain SL476)</name>
    <dbReference type="NCBI Taxonomy" id="454169"/>
    <lineage>
        <taxon>Bacteria</taxon>
        <taxon>Pseudomonadati</taxon>
        <taxon>Pseudomonadota</taxon>
        <taxon>Gammaproteobacteria</taxon>
        <taxon>Enterobacterales</taxon>
        <taxon>Enterobacteriaceae</taxon>
        <taxon>Salmonella</taxon>
    </lineage>
</organism>
<keyword id="KW-0131">Cell cycle</keyword>
<keyword id="KW-0132">Cell division</keyword>
<keyword id="KW-0175">Coiled coil</keyword>
<keyword id="KW-0963">Cytoplasm</keyword>
<keyword id="KW-0717">Septation</keyword>
<proteinExistence type="inferred from homology"/>
<protein>
    <recommendedName>
        <fullName evidence="1">Cell division protein ZapA</fullName>
    </recommendedName>
    <alternativeName>
        <fullName evidence="1">Z ring-associated protein ZapA</fullName>
    </alternativeName>
</protein>
<reference key="1">
    <citation type="journal article" date="2011" name="J. Bacteriol.">
        <title>Comparative genomics of 28 Salmonella enterica isolates: evidence for CRISPR-mediated adaptive sublineage evolution.</title>
        <authorList>
            <person name="Fricke W.F."/>
            <person name="Mammel M.K."/>
            <person name="McDermott P.F."/>
            <person name="Tartera C."/>
            <person name="White D.G."/>
            <person name="Leclerc J.E."/>
            <person name="Ravel J."/>
            <person name="Cebula T.A."/>
        </authorList>
    </citation>
    <scope>NUCLEOTIDE SEQUENCE [LARGE SCALE GENOMIC DNA]</scope>
    <source>
        <strain>SL476</strain>
    </source>
</reference>
<name>ZAPA_SALHS</name>